<dbReference type="EC" id="6.3.5.3" evidence="1"/>
<dbReference type="EMBL" id="AP007281">
    <property type="protein sequence ID" value="BAG24650.1"/>
    <property type="molecule type" value="Genomic_DNA"/>
</dbReference>
<dbReference type="RefSeq" id="WP_003669724.1">
    <property type="nucleotide sequence ID" value="NC_010609.1"/>
</dbReference>
<dbReference type="SMR" id="B2G5B8"/>
<dbReference type="KEGG" id="lrf:LAR_0134"/>
<dbReference type="HOGENOM" id="CLU_003100_0_1_9"/>
<dbReference type="UniPathway" id="UPA00074">
    <property type="reaction ID" value="UER00128"/>
</dbReference>
<dbReference type="GO" id="GO:0005737">
    <property type="term" value="C:cytoplasm"/>
    <property type="evidence" value="ECO:0007669"/>
    <property type="project" value="UniProtKB-SubCell"/>
</dbReference>
<dbReference type="GO" id="GO:0005524">
    <property type="term" value="F:ATP binding"/>
    <property type="evidence" value="ECO:0007669"/>
    <property type="project" value="UniProtKB-UniRule"/>
</dbReference>
<dbReference type="GO" id="GO:0000287">
    <property type="term" value="F:magnesium ion binding"/>
    <property type="evidence" value="ECO:0007669"/>
    <property type="project" value="UniProtKB-UniRule"/>
</dbReference>
<dbReference type="GO" id="GO:0004642">
    <property type="term" value="F:phosphoribosylformylglycinamidine synthase activity"/>
    <property type="evidence" value="ECO:0007669"/>
    <property type="project" value="UniProtKB-UniRule"/>
</dbReference>
<dbReference type="GO" id="GO:0006189">
    <property type="term" value="P:'de novo' IMP biosynthetic process"/>
    <property type="evidence" value="ECO:0007669"/>
    <property type="project" value="UniProtKB-UniRule"/>
</dbReference>
<dbReference type="CDD" id="cd02203">
    <property type="entry name" value="PurL_repeat1"/>
    <property type="match status" value="1"/>
</dbReference>
<dbReference type="CDD" id="cd02204">
    <property type="entry name" value="PurL_repeat2"/>
    <property type="match status" value="1"/>
</dbReference>
<dbReference type="FunFam" id="3.30.1330.10:FF:000004">
    <property type="entry name" value="Phosphoribosylformylglycinamidine synthase subunit PurL"/>
    <property type="match status" value="1"/>
</dbReference>
<dbReference type="Gene3D" id="3.90.650.10">
    <property type="entry name" value="PurM-like C-terminal domain"/>
    <property type="match status" value="2"/>
</dbReference>
<dbReference type="Gene3D" id="3.30.1330.10">
    <property type="entry name" value="PurM-like, N-terminal domain"/>
    <property type="match status" value="2"/>
</dbReference>
<dbReference type="HAMAP" id="MF_00420">
    <property type="entry name" value="PurL_2"/>
    <property type="match status" value="1"/>
</dbReference>
<dbReference type="InterPro" id="IPR010074">
    <property type="entry name" value="PRibForGlyAmidine_synth_PurL"/>
</dbReference>
<dbReference type="InterPro" id="IPR041609">
    <property type="entry name" value="PurL_linker"/>
</dbReference>
<dbReference type="InterPro" id="IPR010918">
    <property type="entry name" value="PurM-like_C_dom"/>
</dbReference>
<dbReference type="InterPro" id="IPR036676">
    <property type="entry name" value="PurM-like_C_sf"/>
</dbReference>
<dbReference type="InterPro" id="IPR016188">
    <property type="entry name" value="PurM-like_N"/>
</dbReference>
<dbReference type="InterPro" id="IPR036921">
    <property type="entry name" value="PurM-like_N_sf"/>
</dbReference>
<dbReference type="NCBIfam" id="TIGR01736">
    <property type="entry name" value="FGAM_synth_II"/>
    <property type="match status" value="1"/>
</dbReference>
<dbReference type="NCBIfam" id="NF002290">
    <property type="entry name" value="PRK01213.1"/>
    <property type="match status" value="1"/>
</dbReference>
<dbReference type="PANTHER" id="PTHR43555">
    <property type="entry name" value="PHOSPHORIBOSYLFORMYLGLYCINAMIDINE SYNTHASE SUBUNIT PURL"/>
    <property type="match status" value="1"/>
</dbReference>
<dbReference type="PANTHER" id="PTHR43555:SF1">
    <property type="entry name" value="PHOSPHORIBOSYLFORMYLGLYCINAMIDINE SYNTHASE SUBUNIT PURL"/>
    <property type="match status" value="1"/>
</dbReference>
<dbReference type="Pfam" id="PF00586">
    <property type="entry name" value="AIRS"/>
    <property type="match status" value="2"/>
</dbReference>
<dbReference type="Pfam" id="PF02769">
    <property type="entry name" value="AIRS_C"/>
    <property type="match status" value="2"/>
</dbReference>
<dbReference type="Pfam" id="PF18072">
    <property type="entry name" value="FGAR-AT_linker"/>
    <property type="match status" value="1"/>
</dbReference>
<dbReference type="PIRSF" id="PIRSF001587">
    <property type="entry name" value="FGAM_synthase_II"/>
    <property type="match status" value="1"/>
</dbReference>
<dbReference type="SUPFAM" id="SSF56042">
    <property type="entry name" value="PurM C-terminal domain-like"/>
    <property type="match status" value="2"/>
</dbReference>
<dbReference type="SUPFAM" id="SSF55326">
    <property type="entry name" value="PurM N-terminal domain-like"/>
    <property type="match status" value="2"/>
</dbReference>
<name>PURL_LIMRJ</name>
<feature type="chain" id="PRO_1000194827" description="Phosphoribosylformylglycinamidine synthase subunit PurL">
    <location>
        <begin position="1"/>
        <end position="742"/>
    </location>
</feature>
<feature type="active site" evidence="1">
    <location>
        <position position="53"/>
    </location>
</feature>
<feature type="active site" description="Proton acceptor" evidence="1">
    <location>
        <position position="99"/>
    </location>
</feature>
<feature type="binding site" evidence="1">
    <location>
        <position position="56"/>
    </location>
    <ligand>
        <name>ATP</name>
        <dbReference type="ChEBI" id="CHEBI:30616"/>
    </ligand>
</feature>
<feature type="binding site" evidence="1">
    <location>
        <position position="95"/>
    </location>
    <ligand>
        <name>ATP</name>
        <dbReference type="ChEBI" id="CHEBI:30616"/>
    </ligand>
</feature>
<feature type="binding site" evidence="1">
    <location>
        <position position="97"/>
    </location>
    <ligand>
        <name>Mg(2+)</name>
        <dbReference type="ChEBI" id="CHEBI:18420"/>
        <label>1</label>
    </ligand>
</feature>
<feature type="binding site" evidence="1">
    <location>
        <begin position="98"/>
        <end position="101"/>
    </location>
    <ligand>
        <name>substrate</name>
    </ligand>
</feature>
<feature type="binding site" evidence="1">
    <location>
        <position position="120"/>
    </location>
    <ligand>
        <name>substrate</name>
    </ligand>
</feature>
<feature type="binding site" evidence="1">
    <location>
        <position position="121"/>
    </location>
    <ligand>
        <name>Mg(2+)</name>
        <dbReference type="ChEBI" id="CHEBI:18420"/>
        <label>2</label>
    </ligand>
</feature>
<feature type="binding site" evidence="1">
    <location>
        <position position="244"/>
    </location>
    <ligand>
        <name>substrate</name>
    </ligand>
</feature>
<feature type="binding site" evidence="1">
    <location>
        <position position="274"/>
    </location>
    <ligand>
        <name>Mg(2+)</name>
        <dbReference type="ChEBI" id="CHEBI:18420"/>
        <label>2</label>
    </ligand>
</feature>
<feature type="binding site" evidence="1">
    <location>
        <begin position="318"/>
        <end position="320"/>
    </location>
    <ligand>
        <name>substrate</name>
    </ligand>
</feature>
<feature type="binding site" evidence="1">
    <location>
        <position position="501"/>
    </location>
    <ligand>
        <name>ATP</name>
        <dbReference type="ChEBI" id="CHEBI:30616"/>
    </ligand>
</feature>
<feature type="binding site" evidence="1">
    <location>
        <position position="538"/>
    </location>
    <ligand>
        <name>ATP</name>
        <dbReference type="ChEBI" id="CHEBI:30616"/>
    </ligand>
</feature>
<feature type="binding site" evidence="1">
    <location>
        <position position="539"/>
    </location>
    <ligand>
        <name>Mg(2+)</name>
        <dbReference type="ChEBI" id="CHEBI:18420"/>
        <label>1</label>
    </ligand>
</feature>
<feature type="binding site" evidence="1">
    <location>
        <position position="541"/>
    </location>
    <ligand>
        <name>substrate</name>
    </ligand>
</feature>
<accession>B2G5B8</accession>
<sequence>MKQAMTPEEIKEKKPYLDWSLTEAEYDYIRTQLLGRLPNYTETGLFSAMWSEHCSYKKSKPVLRLFPNKNERVLQGPGEGAGVVDIDDGQAVVFKAESHNHPTTVEPYQGAATGVGGILRDIFSMGARPIASLDSLHFGELDNSTTRMKVTNTVRGIGDYGNCMGIPTIAGETTFDPCYQGNILCNAMSVGLMDQKDIQQGRAAGIGNAVMYVGAKTGRDGIHGATFASADFNDENMTQRSAVQVGNPFMEKLLLEACLDLIRNHPDWLVGIQDMGAAGIVSSSAEMASEGQSGMELNLDLVPQREPGMSAYEIMLSESQERMLLCVKKGHEEDVKKIFDFYDLEAVTIGRITAGHDYVLFHDGEEVCHIPVSSLTDDVLEEESLEKKPARIELAEQQPAWIPDIDNVAEVLTALLAQSTIADKSSLYQQYDSQVRTNTVAGPGSDAGVLRIRGTHKGLAMTTDGNGRFVYLSPEVGGQIALVEAAANIIASGAEPLAITDCLNYGDPTDPEIFWELHQSVQGMADACREFNTPVISGNVSLYNENNGQAIHPTPMVGMVGLIKNIDRVIPSFVQHPGDKVYLVGQTRDDYAGSELQKMMTGDISGIVESFDLHHVHQYMQRLLTTMENGLVSSAHDLSEGGLGVALAETVFKTDLGLKIDLADQHTARLFSETPGRFIVTVAPEKATEFEQVLGKDAHLIGEVTNSHWLMVKLANGELNENVAKLQETWEEAIPCQLKSKD</sequence>
<proteinExistence type="inferred from homology"/>
<evidence type="ECO:0000255" key="1">
    <source>
        <dbReference type="HAMAP-Rule" id="MF_00420"/>
    </source>
</evidence>
<comment type="function">
    <text evidence="1">Part of the phosphoribosylformylglycinamidine synthase complex involved in the purines biosynthetic pathway. Catalyzes the ATP-dependent conversion of formylglycinamide ribonucleotide (FGAR) and glutamine to yield formylglycinamidine ribonucleotide (FGAM) and glutamate. The FGAM synthase complex is composed of three subunits. PurQ produces an ammonia molecule by converting glutamine to glutamate. PurL transfers the ammonia molecule to FGAR to form FGAM in an ATP-dependent manner. PurS interacts with PurQ and PurL and is thought to assist in the transfer of the ammonia molecule from PurQ to PurL.</text>
</comment>
<comment type="catalytic activity">
    <reaction evidence="1">
        <text>N(2)-formyl-N(1)-(5-phospho-beta-D-ribosyl)glycinamide + L-glutamine + ATP + H2O = 2-formamido-N(1)-(5-O-phospho-beta-D-ribosyl)acetamidine + L-glutamate + ADP + phosphate + H(+)</text>
        <dbReference type="Rhea" id="RHEA:17129"/>
        <dbReference type="ChEBI" id="CHEBI:15377"/>
        <dbReference type="ChEBI" id="CHEBI:15378"/>
        <dbReference type="ChEBI" id="CHEBI:29985"/>
        <dbReference type="ChEBI" id="CHEBI:30616"/>
        <dbReference type="ChEBI" id="CHEBI:43474"/>
        <dbReference type="ChEBI" id="CHEBI:58359"/>
        <dbReference type="ChEBI" id="CHEBI:147286"/>
        <dbReference type="ChEBI" id="CHEBI:147287"/>
        <dbReference type="ChEBI" id="CHEBI:456216"/>
        <dbReference type="EC" id="6.3.5.3"/>
    </reaction>
</comment>
<comment type="pathway">
    <text evidence="1">Purine metabolism; IMP biosynthesis via de novo pathway; 5-amino-1-(5-phospho-D-ribosyl)imidazole from N(2)-formyl-N(1)-(5-phospho-D-ribosyl)glycinamide: step 1/2.</text>
</comment>
<comment type="subunit">
    <text evidence="1">Monomer. Part of the FGAM synthase complex composed of 1 PurL, 1 PurQ and 2 PurS subunits.</text>
</comment>
<comment type="subcellular location">
    <subcellularLocation>
        <location evidence="1">Cytoplasm</location>
    </subcellularLocation>
</comment>
<comment type="similarity">
    <text evidence="1">Belongs to the FGAMS family.</text>
</comment>
<reference key="1">
    <citation type="journal article" date="2008" name="DNA Res.">
        <title>Comparative genome analysis of Lactobacillus reuteri and Lactobacillus fermentum reveal a genomic island for reuterin and cobalamin production.</title>
        <authorList>
            <person name="Morita H."/>
            <person name="Toh H."/>
            <person name="Fukuda S."/>
            <person name="Horikawa H."/>
            <person name="Oshima K."/>
            <person name="Suzuki T."/>
            <person name="Murakami M."/>
            <person name="Hisamatsu S."/>
            <person name="Kato Y."/>
            <person name="Takizawa T."/>
            <person name="Fukuoka H."/>
            <person name="Yoshimura T."/>
            <person name="Itoh K."/>
            <person name="O'Sullivan D.J."/>
            <person name="McKay L.L."/>
            <person name="Ohno H."/>
            <person name="Kikuchi J."/>
            <person name="Masaoka T."/>
            <person name="Hattori M."/>
        </authorList>
    </citation>
    <scope>NUCLEOTIDE SEQUENCE [LARGE SCALE GENOMIC DNA]</scope>
    <source>
        <strain>JCM 1112</strain>
    </source>
</reference>
<protein>
    <recommendedName>
        <fullName evidence="1">Phosphoribosylformylglycinamidine synthase subunit PurL</fullName>
        <shortName evidence="1">FGAM synthase</shortName>
        <ecNumber evidence="1">6.3.5.3</ecNumber>
    </recommendedName>
    <alternativeName>
        <fullName evidence="1">Formylglycinamide ribonucleotide amidotransferase subunit II</fullName>
        <shortName evidence="1">FGAR amidotransferase II</shortName>
        <shortName evidence="1">FGAR-AT II</shortName>
    </alternativeName>
    <alternativeName>
        <fullName evidence="1">Glutamine amidotransferase PurL</fullName>
    </alternativeName>
    <alternativeName>
        <fullName evidence="1">Phosphoribosylformylglycinamidine synthase subunit II</fullName>
    </alternativeName>
</protein>
<gene>
    <name evidence="1" type="primary">purL</name>
    <name type="ordered locus">LAR_0134</name>
</gene>
<keyword id="KW-0067">ATP-binding</keyword>
<keyword id="KW-0963">Cytoplasm</keyword>
<keyword id="KW-0436">Ligase</keyword>
<keyword id="KW-0460">Magnesium</keyword>
<keyword id="KW-0479">Metal-binding</keyword>
<keyword id="KW-0547">Nucleotide-binding</keyword>
<keyword id="KW-0658">Purine biosynthesis</keyword>
<organism>
    <name type="scientific">Limosilactobacillus reuteri subsp. reuteri (strain JCM 1112)</name>
    <name type="common">Lactobacillus reuteri</name>
    <dbReference type="NCBI Taxonomy" id="557433"/>
    <lineage>
        <taxon>Bacteria</taxon>
        <taxon>Bacillati</taxon>
        <taxon>Bacillota</taxon>
        <taxon>Bacilli</taxon>
        <taxon>Lactobacillales</taxon>
        <taxon>Lactobacillaceae</taxon>
        <taxon>Limosilactobacillus</taxon>
    </lineage>
</organism>